<proteinExistence type="inferred from homology"/>
<organism>
    <name type="scientific">Magnetococcus marinus (strain ATCC BAA-1437 / JCM 17883 / MC-1)</name>
    <dbReference type="NCBI Taxonomy" id="156889"/>
    <lineage>
        <taxon>Bacteria</taxon>
        <taxon>Pseudomonadati</taxon>
        <taxon>Pseudomonadota</taxon>
        <taxon>Alphaproteobacteria</taxon>
        <taxon>Magnetococcales</taxon>
        <taxon>Magnetococcaceae</taxon>
        <taxon>Magnetococcus</taxon>
    </lineage>
</organism>
<feature type="chain" id="PRO_0000288345" description="Proline--tRNA ligase">
    <location>
        <begin position="1"/>
        <end position="576"/>
    </location>
</feature>
<reference key="1">
    <citation type="journal article" date="2009" name="Appl. Environ. Microbiol.">
        <title>Complete genome sequence of the chemolithoautotrophic marine magnetotactic coccus strain MC-1.</title>
        <authorList>
            <person name="Schubbe S."/>
            <person name="Williams T.J."/>
            <person name="Xie G."/>
            <person name="Kiss H.E."/>
            <person name="Brettin T.S."/>
            <person name="Martinez D."/>
            <person name="Ross C.A."/>
            <person name="Schuler D."/>
            <person name="Cox B.L."/>
            <person name="Nealson K.H."/>
            <person name="Bazylinski D.A."/>
        </authorList>
    </citation>
    <scope>NUCLEOTIDE SEQUENCE [LARGE SCALE GENOMIC DNA]</scope>
    <source>
        <strain>ATCC BAA-1437 / JCM 17883 / MC-1</strain>
    </source>
</reference>
<dbReference type="EC" id="6.1.1.15" evidence="1"/>
<dbReference type="EMBL" id="CP000471">
    <property type="protein sequence ID" value="ABK44275.1"/>
    <property type="molecule type" value="Genomic_DNA"/>
</dbReference>
<dbReference type="RefSeq" id="WP_011713422.1">
    <property type="nucleotide sequence ID" value="NC_008576.1"/>
</dbReference>
<dbReference type="SMR" id="A0L8I2"/>
<dbReference type="STRING" id="156889.Mmc1_1767"/>
<dbReference type="KEGG" id="mgm:Mmc1_1767"/>
<dbReference type="eggNOG" id="COG0442">
    <property type="taxonomic scope" value="Bacteria"/>
</dbReference>
<dbReference type="HOGENOM" id="CLU_016739_0_0_5"/>
<dbReference type="OrthoDB" id="9809052at2"/>
<dbReference type="Proteomes" id="UP000002586">
    <property type="component" value="Chromosome"/>
</dbReference>
<dbReference type="GO" id="GO:0005829">
    <property type="term" value="C:cytosol"/>
    <property type="evidence" value="ECO:0007669"/>
    <property type="project" value="TreeGrafter"/>
</dbReference>
<dbReference type="GO" id="GO:0002161">
    <property type="term" value="F:aminoacyl-tRNA deacylase activity"/>
    <property type="evidence" value="ECO:0007669"/>
    <property type="project" value="InterPro"/>
</dbReference>
<dbReference type="GO" id="GO:0005524">
    <property type="term" value="F:ATP binding"/>
    <property type="evidence" value="ECO:0007669"/>
    <property type="project" value="UniProtKB-UniRule"/>
</dbReference>
<dbReference type="GO" id="GO:0004827">
    <property type="term" value="F:proline-tRNA ligase activity"/>
    <property type="evidence" value="ECO:0007669"/>
    <property type="project" value="UniProtKB-UniRule"/>
</dbReference>
<dbReference type="GO" id="GO:0006433">
    <property type="term" value="P:prolyl-tRNA aminoacylation"/>
    <property type="evidence" value="ECO:0007669"/>
    <property type="project" value="UniProtKB-UniRule"/>
</dbReference>
<dbReference type="CDD" id="cd04334">
    <property type="entry name" value="ProRS-INS"/>
    <property type="match status" value="1"/>
</dbReference>
<dbReference type="CDD" id="cd00861">
    <property type="entry name" value="ProRS_anticodon_short"/>
    <property type="match status" value="1"/>
</dbReference>
<dbReference type="CDD" id="cd00779">
    <property type="entry name" value="ProRS_core_prok"/>
    <property type="match status" value="1"/>
</dbReference>
<dbReference type="FunFam" id="3.30.930.10:FF:000062">
    <property type="entry name" value="Proline--tRNA ligase"/>
    <property type="match status" value="1"/>
</dbReference>
<dbReference type="FunFam" id="3.30.930.10:FF:000066">
    <property type="entry name" value="Proline--tRNA ligase"/>
    <property type="match status" value="1"/>
</dbReference>
<dbReference type="Gene3D" id="3.40.50.800">
    <property type="entry name" value="Anticodon-binding domain"/>
    <property type="match status" value="1"/>
</dbReference>
<dbReference type="Gene3D" id="3.30.930.10">
    <property type="entry name" value="Bira Bifunctional Protein, Domain 2"/>
    <property type="match status" value="2"/>
</dbReference>
<dbReference type="HAMAP" id="MF_01569">
    <property type="entry name" value="Pro_tRNA_synth_type1"/>
    <property type="match status" value="1"/>
</dbReference>
<dbReference type="InterPro" id="IPR002314">
    <property type="entry name" value="aa-tRNA-synt_IIb"/>
</dbReference>
<dbReference type="InterPro" id="IPR006195">
    <property type="entry name" value="aa-tRNA-synth_II"/>
</dbReference>
<dbReference type="InterPro" id="IPR045864">
    <property type="entry name" value="aa-tRNA-synth_II/BPL/LPL"/>
</dbReference>
<dbReference type="InterPro" id="IPR004154">
    <property type="entry name" value="Anticodon-bd"/>
</dbReference>
<dbReference type="InterPro" id="IPR036621">
    <property type="entry name" value="Anticodon-bd_dom_sf"/>
</dbReference>
<dbReference type="InterPro" id="IPR002316">
    <property type="entry name" value="Pro-tRNA-ligase_IIa"/>
</dbReference>
<dbReference type="InterPro" id="IPR004500">
    <property type="entry name" value="Pro-tRNA-synth_IIa_bac-type"/>
</dbReference>
<dbReference type="InterPro" id="IPR023717">
    <property type="entry name" value="Pro-tRNA-Synthase_IIa_type1"/>
</dbReference>
<dbReference type="InterPro" id="IPR050062">
    <property type="entry name" value="Pro-tRNA_synthetase"/>
</dbReference>
<dbReference type="InterPro" id="IPR044140">
    <property type="entry name" value="ProRS_anticodon_short"/>
</dbReference>
<dbReference type="InterPro" id="IPR033730">
    <property type="entry name" value="ProRS_core_prok"/>
</dbReference>
<dbReference type="InterPro" id="IPR036754">
    <property type="entry name" value="YbaK/aa-tRNA-synt-asso_dom_sf"/>
</dbReference>
<dbReference type="InterPro" id="IPR007214">
    <property type="entry name" value="YbaK/aa-tRNA-synth-assoc-dom"/>
</dbReference>
<dbReference type="NCBIfam" id="NF006625">
    <property type="entry name" value="PRK09194.1"/>
    <property type="match status" value="1"/>
</dbReference>
<dbReference type="NCBIfam" id="TIGR00409">
    <property type="entry name" value="proS_fam_II"/>
    <property type="match status" value="1"/>
</dbReference>
<dbReference type="PANTHER" id="PTHR42753">
    <property type="entry name" value="MITOCHONDRIAL RIBOSOME PROTEIN L39/PROLYL-TRNA LIGASE FAMILY MEMBER"/>
    <property type="match status" value="1"/>
</dbReference>
<dbReference type="PANTHER" id="PTHR42753:SF2">
    <property type="entry name" value="PROLINE--TRNA LIGASE"/>
    <property type="match status" value="1"/>
</dbReference>
<dbReference type="Pfam" id="PF03129">
    <property type="entry name" value="HGTP_anticodon"/>
    <property type="match status" value="1"/>
</dbReference>
<dbReference type="Pfam" id="PF00587">
    <property type="entry name" value="tRNA-synt_2b"/>
    <property type="match status" value="1"/>
</dbReference>
<dbReference type="Pfam" id="PF04073">
    <property type="entry name" value="tRNA_edit"/>
    <property type="match status" value="1"/>
</dbReference>
<dbReference type="PIRSF" id="PIRSF001535">
    <property type="entry name" value="ProRS_1"/>
    <property type="match status" value="1"/>
</dbReference>
<dbReference type="PRINTS" id="PR01046">
    <property type="entry name" value="TRNASYNTHPRO"/>
</dbReference>
<dbReference type="SUPFAM" id="SSF52954">
    <property type="entry name" value="Class II aaRS ABD-related"/>
    <property type="match status" value="1"/>
</dbReference>
<dbReference type="SUPFAM" id="SSF55681">
    <property type="entry name" value="Class II aaRS and biotin synthetases"/>
    <property type="match status" value="1"/>
</dbReference>
<dbReference type="SUPFAM" id="SSF55826">
    <property type="entry name" value="YbaK/ProRS associated domain"/>
    <property type="match status" value="1"/>
</dbReference>
<dbReference type="PROSITE" id="PS50862">
    <property type="entry name" value="AA_TRNA_LIGASE_II"/>
    <property type="match status" value="1"/>
</dbReference>
<protein>
    <recommendedName>
        <fullName evidence="1">Proline--tRNA ligase</fullName>
        <ecNumber evidence="1">6.1.1.15</ecNumber>
    </recommendedName>
    <alternativeName>
        <fullName evidence="1">Prolyl-tRNA synthetase</fullName>
        <shortName evidence="1">ProRS</shortName>
    </alternativeName>
</protein>
<accession>A0L8I2</accession>
<sequence length="576" mass="64209">MRFSQTLIPTLKEEPSEAQVISHKLMLRAGLIRQLGAGIYTWLPMGLKVLRKVETIVRQEMDRAGAQEVLMPSIQPAELWEESGRWKMYGKELLRITDRHNRSFCYGPTHEEVISDLVRREIHSYKQLPANFYQIQTKFRDEVRPRFGIMRGREFLMKDAYSFDIDEAALDKSYRLMFEAYNKIFNRLDLKFRPVEADTGAIGGASSHEFHVLAQSGEDVIASCTHCQYAANLEKAFGIAVDLDGGVPEAMVRVATPGQKSIEEVAAFLKMDKARTVKCLTWHDPEADQWYLLLLRGDHTLNEVKACNATAPLAQIPAPEKAVEALGVAVGYLGAVGAEKFNKPVKILADSALRDVTNMVCGANEEGYHLTGVNWQRDLPKPEFVDLRNVEEGDGCPRCGPGSMELSRGIEVGHVFKLGYKYSEAMGVKVLDEDGKEKPLIMGCYGIGVSRIVAAAIEQNHDENGIIWPLAIAPFEVEVVVMNPNESDAMEKAEEITAQLQAGQLEVLLDDRDERAGSKFKDADLLGAPYRVLVGGRAFKEGVCEVKNRRSGVVEKIPVESVVETLLQWLAQEKKA</sequence>
<name>SYP_MAGMM</name>
<comment type="function">
    <text evidence="1">Catalyzes the attachment of proline to tRNA(Pro) in a two-step reaction: proline is first activated by ATP to form Pro-AMP and then transferred to the acceptor end of tRNA(Pro). As ProRS can inadvertently accommodate and process non-cognate amino acids such as alanine and cysteine, to avoid such errors it has two additional distinct editing activities against alanine. One activity is designated as 'pretransfer' editing and involves the tRNA(Pro)-independent hydrolysis of activated Ala-AMP. The other activity is designated 'posttransfer' editing and involves deacylation of mischarged Ala-tRNA(Pro). The misacylated Cys-tRNA(Pro) is not edited by ProRS.</text>
</comment>
<comment type="catalytic activity">
    <reaction evidence="1">
        <text>tRNA(Pro) + L-proline + ATP = L-prolyl-tRNA(Pro) + AMP + diphosphate</text>
        <dbReference type="Rhea" id="RHEA:14305"/>
        <dbReference type="Rhea" id="RHEA-COMP:9700"/>
        <dbReference type="Rhea" id="RHEA-COMP:9702"/>
        <dbReference type="ChEBI" id="CHEBI:30616"/>
        <dbReference type="ChEBI" id="CHEBI:33019"/>
        <dbReference type="ChEBI" id="CHEBI:60039"/>
        <dbReference type="ChEBI" id="CHEBI:78442"/>
        <dbReference type="ChEBI" id="CHEBI:78532"/>
        <dbReference type="ChEBI" id="CHEBI:456215"/>
        <dbReference type="EC" id="6.1.1.15"/>
    </reaction>
</comment>
<comment type="subunit">
    <text evidence="1">Homodimer.</text>
</comment>
<comment type="subcellular location">
    <subcellularLocation>
        <location evidence="1">Cytoplasm</location>
    </subcellularLocation>
</comment>
<comment type="domain">
    <text evidence="1">Consists of three domains: the N-terminal catalytic domain, the editing domain and the C-terminal anticodon-binding domain.</text>
</comment>
<comment type="similarity">
    <text evidence="1">Belongs to the class-II aminoacyl-tRNA synthetase family. ProS type 1 subfamily.</text>
</comment>
<gene>
    <name evidence="1" type="primary">proS</name>
    <name type="ordered locus">Mmc1_1767</name>
</gene>
<evidence type="ECO:0000255" key="1">
    <source>
        <dbReference type="HAMAP-Rule" id="MF_01569"/>
    </source>
</evidence>
<keyword id="KW-0030">Aminoacyl-tRNA synthetase</keyword>
<keyword id="KW-0067">ATP-binding</keyword>
<keyword id="KW-0963">Cytoplasm</keyword>
<keyword id="KW-0436">Ligase</keyword>
<keyword id="KW-0547">Nucleotide-binding</keyword>
<keyword id="KW-0648">Protein biosynthesis</keyword>
<keyword id="KW-1185">Reference proteome</keyword>